<keyword id="KW-0175">Coiled coil</keyword>
<keyword id="KW-0238">DNA-binding</keyword>
<keyword id="KW-0539">Nucleus</keyword>
<keyword id="KW-1185">Reference proteome</keyword>
<keyword id="KW-0804">Transcription</keyword>
<keyword id="KW-0805">Transcription regulation</keyword>
<gene>
    <name evidence="3" type="primary">PHL11</name>
    <name evidence="4" type="ordered locus">At5g45580</name>
    <name evidence="5" type="ORF">K2N11.5</name>
</gene>
<dbReference type="EMBL" id="AB022213">
    <property type="protein sequence ID" value="BAB11197.1"/>
    <property type="status" value="ALT_SEQ"/>
    <property type="molecule type" value="Genomic_DNA"/>
</dbReference>
<dbReference type="EMBL" id="CP002688">
    <property type="protein sequence ID" value="AED95271.1"/>
    <property type="status" value="ALT_INIT"/>
    <property type="molecule type" value="Genomic_DNA"/>
</dbReference>
<dbReference type="EMBL" id="CP002688">
    <property type="protein sequence ID" value="ANM68717.1"/>
    <property type="molecule type" value="Genomic_DNA"/>
</dbReference>
<dbReference type="EMBL" id="AB493777">
    <property type="protein sequence ID" value="BAH30615.1"/>
    <property type="molecule type" value="mRNA"/>
</dbReference>
<dbReference type="RefSeq" id="NP_001330443.1">
    <property type="nucleotide sequence ID" value="NM_001344633.1"/>
</dbReference>
<dbReference type="RefSeq" id="NP_199371.2">
    <property type="nucleotide sequence ID" value="NM_123926.3"/>
</dbReference>
<dbReference type="SMR" id="C0SVS4"/>
<dbReference type="FunCoup" id="C0SVS4">
    <property type="interactions" value="545"/>
</dbReference>
<dbReference type="IntAct" id="C0SVS4">
    <property type="interactions" value="12"/>
</dbReference>
<dbReference type="STRING" id="3702.C0SVS4"/>
<dbReference type="iPTMnet" id="C0SVS4"/>
<dbReference type="PaxDb" id="3702-AT5G45580.1"/>
<dbReference type="DNASU" id="834596"/>
<dbReference type="EnsemblPlants" id="AT5G45580.2">
    <property type="protein sequence ID" value="AT5G45580.2"/>
    <property type="gene ID" value="AT5G45580"/>
</dbReference>
<dbReference type="GeneID" id="834596"/>
<dbReference type="Gramene" id="AT5G45580.2">
    <property type="protein sequence ID" value="AT5G45580.2"/>
    <property type="gene ID" value="AT5G45580"/>
</dbReference>
<dbReference type="KEGG" id="ath:AT5G45580"/>
<dbReference type="Araport" id="AT5G45580"/>
<dbReference type="TAIR" id="AT5G45580"/>
<dbReference type="eggNOG" id="ENOG502RIH2">
    <property type="taxonomic scope" value="Eukaryota"/>
</dbReference>
<dbReference type="InParanoid" id="C0SVS4"/>
<dbReference type="OMA" id="RSQLMDF"/>
<dbReference type="PhylomeDB" id="C0SVS4"/>
<dbReference type="PRO" id="PR:C0SVS4"/>
<dbReference type="Proteomes" id="UP000006548">
    <property type="component" value="Chromosome 5"/>
</dbReference>
<dbReference type="ExpressionAtlas" id="C0SVS4">
    <property type="expression patterns" value="baseline and differential"/>
</dbReference>
<dbReference type="GO" id="GO:0005634">
    <property type="term" value="C:nucleus"/>
    <property type="evidence" value="ECO:0007669"/>
    <property type="project" value="UniProtKB-SubCell"/>
</dbReference>
<dbReference type="GO" id="GO:0003677">
    <property type="term" value="F:DNA binding"/>
    <property type="evidence" value="ECO:0007669"/>
    <property type="project" value="UniProtKB-KW"/>
</dbReference>
<dbReference type="GO" id="GO:0003700">
    <property type="term" value="F:DNA-binding transcription factor activity"/>
    <property type="evidence" value="ECO:0000250"/>
    <property type="project" value="TAIR"/>
</dbReference>
<dbReference type="GO" id="GO:0006355">
    <property type="term" value="P:regulation of DNA-templated transcription"/>
    <property type="evidence" value="ECO:0000304"/>
    <property type="project" value="TAIR"/>
</dbReference>
<dbReference type="GO" id="GO:2000762">
    <property type="term" value="P:regulation of phenylpropanoid metabolic process"/>
    <property type="evidence" value="ECO:0000315"/>
    <property type="project" value="TAIR"/>
</dbReference>
<dbReference type="FunFam" id="1.10.10.60:FF:000002">
    <property type="entry name" value="Myb family transcription factor"/>
    <property type="match status" value="1"/>
</dbReference>
<dbReference type="Gene3D" id="1.10.10.60">
    <property type="entry name" value="Homeodomain-like"/>
    <property type="match status" value="1"/>
</dbReference>
<dbReference type="InterPro" id="IPR009057">
    <property type="entry name" value="Homeodomain-like_sf"/>
</dbReference>
<dbReference type="InterPro" id="IPR025756">
    <property type="entry name" value="Myb_CC_LHEQLE"/>
</dbReference>
<dbReference type="InterPro" id="IPR017930">
    <property type="entry name" value="Myb_dom"/>
</dbReference>
<dbReference type="InterPro" id="IPR006447">
    <property type="entry name" value="Myb_dom_plants"/>
</dbReference>
<dbReference type="InterPro" id="IPR046955">
    <property type="entry name" value="PHR1-like"/>
</dbReference>
<dbReference type="InterPro" id="IPR001005">
    <property type="entry name" value="SANT/Myb"/>
</dbReference>
<dbReference type="NCBIfam" id="TIGR01557">
    <property type="entry name" value="myb_SHAQKYF"/>
    <property type="match status" value="1"/>
</dbReference>
<dbReference type="PANTHER" id="PTHR31499">
    <property type="entry name" value="MYB FAMILY TRANSCRIPTION FACTOR PHL11"/>
    <property type="match status" value="1"/>
</dbReference>
<dbReference type="PANTHER" id="PTHR31499:SF23">
    <property type="entry name" value="MYB FAMILY TRANSCRIPTION FACTOR PHL11"/>
    <property type="match status" value="1"/>
</dbReference>
<dbReference type="Pfam" id="PF14379">
    <property type="entry name" value="Myb_CC_LHEQLE"/>
    <property type="match status" value="1"/>
</dbReference>
<dbReference type="Pfam" id="PF00249">
    <property type="entry name" value="Myb_DNA-binding"/>
    <property type="match status" value="1"/>
</dbReference>
<dbReference type="SUPFAM" id="SSF46689">
    <property type="entry name" value="Homeodomain-like"/>
    <property type="match status" value="1"/>
</dbReference>
<dbReference type="PROSITE" id="PS51294">
    <property type="entry name" value="HTH_MYB"/>
    <property type="match status" value="1"/>
</dbReference>
<comment type="interaction">
    <interactant intactId="EBI-15194203">
        <id>C0SVS4</id>
    </interactant>
    <interactant intactId="EBI-1238466">
        <id>Q9FL03</id>
        <label>SCL4</label>
    </interactant>
    <organismsDiffer>false</organismsDiffer>
    <experiments>4</experiments>
</comment>
<comment type="interaction">
    <interactant intactId="EBI-15194203">
        <id>C0SVS4</id>
    </interactant>
    <interactant intactId="EBI-15193551">
        <id>Q9SCR0</id>
        <label>SCL7</label>
    </interactant>
    <organismsDiffer>false</organismsDiffer>
    <experiments>3</experiments>
</comment>
<comment type="subcellular location">
    <subcellularLocation>
        <location evidence="1">Nucleus</location>
    </subcellularLocation>
</comment>
<comment type="similarity">
    <text evidence="3">Belongs to the MYB-CC family.</text>
</comment>
<comment type="sequence caution" evidence="3">
    <conflict type="erroneous initiation">
        <sequence resource="EMBL-CDS" id="AED95271"/>
    </conflict>
    <text>Truncated N-terminus.</text>
</comment>
<comment type="sequence caution" evidence="3">
    <conflict type="erroneous gene model prediction">
        <sequence resource="EMBL-CDS" id="BAB11197"/>
    </conflict>
</comment>
<name>PHLB_ARATH</name>
<accession>C0SVS4</accession>
<accession>F4KEK2</accession>
<accession>Q9FH42</accession>
<sequence length="280" mass="31105">MERVNLGGLGYDNGGVMMTRDPKPRLRWTADLHDRFVDAVAKLGGADKATPKSVLKLMGLKGLTLYHLKSHLQKYRLGQQQGKKQNRTEQNKENAGSSYVHFDNCSQGGISNDSRFDNHQRQSGNVPFAEAMRHQVDAQQRFQEQLEVQKKLQMRMEAQGKYLLTLLEKAQKSLPCGNAGETDKGQFSDFNLALSGLVGSDRKNEKAGLVTDISHLNGGDSSQEFRLCGEQEKIETGDACVKPESGFVHFDLNSKSGYDLLNCGKYGIEVKPNVIGDRLQ</sequence>
<feature type="chain" id="PRO_0000436868" description="Myb family transcription factor PHL11">
    <location>
        <begin position="1"/>
        <end position="280"/>
    </location>
</feature>
<feature type="domain" description="HTH myb-type" evidence="1">
    <location>
        <begin position="20"/>
        <end position="80"/>
    </location>
</feature>
<feature type="DNA-binding region" description="H-T-H motif" evidence="1">
    <location>
        <begin position="51"/>
        <end position="76"/>
    </location>
</feature>
<feature type="region of interest" description="Disordered" evidence="2">
    <location>
        <begin position="77"/>
        <end position="98"/>
    </location>
</feature>
<feature type="region of interest" description="Coiled coil" evidence="3">
    <location>
        <begin position="129"/>
        <end position="149"/>
    </location>
</feature>
<feature type="short sequence motif" description="LHEQLE" evidence="3">
    <location>
        <begin position="142"/>
        <end position="147"/>
    </location>
</feature>
<proteinExistence type="evidence at protein level"/>
<reference key="1">
    <citation type="journal article" date="2000" name="DNA Res.">
        <title>Structural analysis of Arabidopsis thaliana chromosome 5. X. Sequence features of the regions of 3,076,755 bp covered by sixty P1 and TAC clones.</title>
        <authorList>
            <person name="Sato S."/>
            <person name="Nakamura Y."/>
            <person name="Kaneko T."/>
            <person name="Katoh T."/>
            <person name="Asamizu E."/>
            <person name="Kotani H."/>
            <person name="Tabata S."/>
        </authorList>
    </citation>
    <scope>NUCLEOTIDE SEQUENCE [LARGE SCALE GENOMIC DNA]</scope>
    <source>
        <strain>cv. Columbia</strain>
    </source>
</reference>
<reference key="2">
    <citation type="journal article" date="2017" name="Plant J.">
        <title>Araport11: a complete reannotation of the Arabidopsis thaliana reference genome.</title>
        <authorList>
            <person name="Cheng C.Y."/>
            <person name="Krishnakumar V."/>
            <person name="Chan A.P."/>
            <person name="Thibaud-Nissen F."/>
            <person name="Schobel S."/>
            <person name="Town C.D."/>
        </authorList>
    </citation>
    <scope>GENOME REANNOTATION</scope>
    <source>
        <strain>cv. Columbia</strain>
    </source>
</reference>
<reference key="3">
    <citation type="submission" date="2009-03" db="EMBL/GenBank/DDBJ databases">
        <title>ORF cloning and analysis of Arabidopsis transcription factor genes.</title>
        <authorList>
            <person name="Fujita M."/>
            <person name="Mizukado S."/>
            <person name="Seki M."/>
            <person name="Shinozaki K."/>
            <person name="Mitsuda N."/>
            <person name="Takiguchi Y."/>
            <person name="Takagi M."/>
        </authorList>
    </citation>
    <scope>NUCLEOTIDE SEQUENCE [LARGE SCALE MRNA]</scope>
</reference>
<reference key="4">
    <citation type="journal article" date="2001" name="Genes Dev.">
        <title>A conserved MYB transcription factor involved in phosphate starvation signaling both in vascular plants and in unicellular algae.</title>
        <authorList>
            <person name="Rubio V."/>
            <person name="Linhares F."/>
            <person name="Solano R."/>
            <person name="Martin A.C."/>
            <person name="Iglesias J."/>
            <person name="Leyva A."/>
            <person name="Paz-Ares J."/>
        </authorList>
    </citation>
    <scope>GENE FAMILY</scope>
</reference>
<evidence type="ECO:0000255" key="1">
    <source>
        <dbReference type="PROSITE-ProRule" id="PRU00625"/>
    </source>
</evidence>
<evidence type="ECO:0000256" key="2">
    <source>
        <dbReference type="SAM" id="MobiDB-lite"/>
    </source>
</evidence>
<evidence type="ECO:0000305" key="3"/>
<evidence type="ECO:0000312" key="4">
    <source>
        <dbReference type="Araport" id="AT5G45580"/>
    </source>
</evidence>
<evidence type="ECO:0000312" key="5">
    <source>
        <dbReference type="EMBL" id="BAB11197.1"/>
    </source>
</evidence>
<evidence type="ECO:0000312" key="6">
    <source>
        <dbReference type="EMBL" id="BAH30615.1"/>
    </source>
</evidence>
<protein>
    <recommendedName>
        <fullName evidence="3">Myb family transcription factor PHL11</fullName>
    </recommendedName>
    <alternativeName>
        <fullName evidence="3">Protein PHR1-LIKE 11</fullName>
    </alternativeName>
</protein>
<organism evidence="6">
    <name type="scientific">Arabidopsis thaliana</name>
    <name type="common">Mouse-ear cress</name>
    <dbReference type="NCBI Taxonomy" id="3702"/>
    <lineage>
        <taxon>Eukaryota</taxon>
        <taxon>Viridiplantae</taxon>
        <taxon>Streptophyta</taxon>
        <taxon>Embryophyta</taxon>
        <taxon>Tracheophyta</taxon>
        <taxon>Spermatophyta</taxon>
        <taxon>Magnoliopsida</taxon>
        <taxon>eudicotyledons</taxon>
        <taxon>Gunneridae</taxon>
        <taxon>Pentapetalae</taxon>
        <taxon>rosids</taxon>
        <taxon>malvids</taxon>
        <taxon>Brassicales</taxon>
        <taxon>Brassicaceae</taxon>
        <taxon>Camelineae</taxon>
        <taxon>Arabidopsis</taxon>
    </lineage>
</organism>